<proteinExistence type="inferred from homology"/>
<dbReference type="EC" id="3.-.-.-" evidence="1"/>
<dbReference type="EMBL" id="AE016879">
    <property type="protein sequence ID" value="AAP26542.1"/>
    <property type="molecule type" value="Genomic_DNA"/>
</dbReference>
<dbReference type="EMBL" id="AE017334">
    <property type="protein sequence ID" value="AAT31816.1"/>
    <property type="molecule type" value="Genomic_DNA"/>
</dbReference>
<dbReference type="EMBL" id="AE017225">
    <property type="protein sequence ID" value="AAT54826.1"/>
    <property type="molecule type" value="Genomic_DNA"/>
</dbReference>
<dbReference type="RefSeq" id="NP_845056.1">
    <property type="nucleotide sequence ID" value="NC_003997.3"/>
</dbReference>
<dbReference type="RefSeq" id="WP_000999075.1">
    <property type="nucleotide sequence ID" value="NZ_WXWZ01000036.1"/>
</dbReference>
<dbReference type="RefSeq" id="YP_028775.1">
    <property type="nucleotide sequence ID" value="NC_005945.1"/>
</dbReference>
<dbReference type="SMR" id="Q81PU5"/>
<dbReference type="STRING" id="261594.GBAA_2700"/>
<dbReference type="DNASU" id="1087645"/>
<dbReference type="GeneID" id="45022546"/>
<dbReference type="KEGG" id="ban:BA_2700"/>
<dbReference type="KEGG" id="bar:GBAA_2700"/>
<dbReference type="KEGG" id="bat:BAS2515"/>
<dbReference type="PATRIC" id="fig|198094.11.peg.2683"/>
<dbReference type="eggNOG" id="COG2318">
    <property type="taxonomic scope" value="Bacteria"/>
</dbReference>
<dbReference type="HOGENOM" id="CLU_105789_1_0_9"/>
<dbReference type="OMA" id="YRPEGWT"/>
<dbReference type="OrthoDB" id="9796039at2"/>
<dbReference type="Proteomes" id="UP000000427">
    <property type="component" value="Chromosome"/>
</dbReference>
<dbReference type="Proteomes" id="UP000000594">
    <property type="component" value="Chromosome"/>
</dbReference>
<dbReference type="GO" id="GO:0005737">
    <property type="term" value="C:cytoplasm"/>
    <property type="evidence" value="ECO:0007669"/>
    <property type="project" value="UniProtKB-SubCell"/>
</dbReference>
<dbReference type="GO" id="GO:0016787">
    <property type="term" value="F:hydrolase activity"/>
    <property type="evidence" value="ECO:0007669"/>
    <property type="project" value="UniProtKB-UniRule"/>
</dbReference>
<dbReference type="GO" id="GO:0008270">
    <property type="term" value="F:zinc ion binding"/>
    <property type="evidence" value="ECO:0007669"/>
    <property type="project" value="UniProtKB-UniRule"/>
</dbReference>
<dbReference type="Gene3D" id="1.20.120.450">
    <property type="entry name" value="dinb family like domain"/>
    <property type="match status" value="1"/>
</dbReference>
<dbReference type="HAMAP" id="MF_01256">
    <property type="entry name" value="YfiT_hydrol"/>
    <property type="match status" value="1"/>
</dbReference>
<dbReference type="InterPro" id="IPR024775">
    <property type="entry name" value="DinB-like"/>
</dbReference>
<dbReference type="InterPro" id="IPR034660">
    <property type="entry name" value="DinB/YfiT-like"/>
</dbReference>
<dbReference type="InterPro" id="IPR023774">
    <property type="entry name" value="Put_metal_dep_hydrolase_YfiT"/>
</dbReference>
<dbReference type="NCBIfam" id="NF009807">
    <property type="entry name" value="PRK13291.1"/>
    <property type="match status" value="1"/>
</dbReference>
<dbReference type="Pfam" id="PF12867">
    <property type="entry name" value="DinB_2"/>
    <property type="match status" value="1"/>
</dbReference>
<dbReference type="SUPFAM" id="SSF109854">
    <property type="entry name" value="DinB/YfiT-like putative metalloenzymes"/>
    <property type="match status" value="1"/>
</dbReference>
<evidence type="ECO:0000255" key="1">
    <source>
        <dbReference type="HAMAP-Rule" id="MF_01256"/>
    </source>
</evidence>
<gene>
    <name type="ordered locus">BA_2700</name>
    <name type="ordered locus">GBAA_2700</name>
    <name type="ordered locus">BAS2515</name>
</gene>
<reference key="1">
    <citation type="journal article" date="2003" name="Nature">
        <title>The genome sequence of Bacillus anthracis Ames and comparison to closely related bacteria.</title>
        <authorList>
            <person name="Read T.D."/>
            <person name="Peterson S.N."/>
            <person name="Tourasse N.J."/>
            <person name="Baillie L.W."/>
            <person name="Paulsen I.T."/>
            <person name="Nelson K.E."/>
            <person name="Tettelin H."/>
            <person name="Fouts D.E."/>
            <person name="Eisen J.A."/>
            <person name="Gill S.R."/>
            <person name="Holtzapple E.K."/>
            <person name="Okstad O.A."/>
            <person name="Helgason E."/>
            <person name="Rilstone J."/>
            <person name="Wu M."/>
            <person name="Kolonay J.F."/>
            <person name="Beanan M.J."/>
            <person name="Dodson R.J."/>
            <person name="Brinkac L.M."/>
            <person name="Gwinn M.L."/>
            <person name="DeBoy R.T."/>
            <person name="Madpu R."/>
            <person name="Daugherty S.C."/>
            <person name="Durkin A.S."/>
            <person name="Haft D.H."/>
            <person name="Nelson W.C."/>
            <person name="Peterson J.D."/>
            <person name="Pop M."/>
            <person name="Khouri H.M."/>
            <person name="Radune D."/>
            <person name="Benton J.L."/>
            <person name="Mahamoud Y."/>
            <person name="Jiang L."/>
            <person name="Hance I.R."/>
            <person name="Weidman J.F."/>
            <person name="Berry K.J."/>
            <person name="Plaut R.D."/>
            <person name="Wolf A.M."/>
            <person name="Watkins K.L."/>
            <person name="Nierman W.C."/>
            <person name="Hazen A."/>
            <person name="Cline R.T."/>
            <person name="Redmond C."/>
            <person name="Thwaite J.E."/>
            <person name="White O."/>
            <person name="Salzberg S.L."/>
            <person name="Thomason B."/>
            <person name="Friedlander A.M."/>
            <person name="Koehler T.M."/>
            <person name="Hanna P.C."/>
            <person name="Kolstoe A.-B."/>
            <person name="Fraser C.M."/>
        </authorList>
    </citation>
    <scope>NUCLEOTIDE SEQUENCE [LARGE SCALE GENOMIC DNA]</scope>
    <source>
        <strain>Ames / isolate Porton</strain>
    </source>
</reference>
<reference key="2">
    <citation type="journal article" date="2009" name="J. Bacteriol.">
        <title>The complete genome sequence of Bacillus anthracis Ames 'Ancestor'.</title>
        <authorList>
            <person name="Ravel J."/>
            <person name="Jiang L."/>
            <person name="Stanley S.T."/>
            <person name="Wilson M.R."/>
            <person name="Decker R.S."/>
            <person name="Read T.D."/>
            <person name="Worsham P."/>
            <person name="Keim P.S."/>
            <person name="Salzberg S.L."/>
            <person name="Fraser-Liggett C.M."/>
            <person name="Rasko D.A."/>
        </authorList>
    </citation>
    <scope>NUCLEOTIDE SEQUENCE [LARGE SCALE GENOMIC DNA]</scope>
    <source>
        <strain>Ames ancestor</strain>
    </source>
</reference>
<reference key="3">
    <citation type="submission" date="2004-01" db="EMBL/GenBank/DDBJ databases">
        <title>Complete genome sequence of Bacillus anthracis Sterne.</title>
        <authorList>
            <person name="Brettin T.S."/>
            <person name="Bruce D."/>
            <person name="Challacombe J.F."/>
            <person name="Gilna P."/>
            <person name="Han C."/>
            <person name="Hill K."/>
            <person name="Hitchcock P."/>
            <person name="Jackson P."/>
            <person name="Keim P."/>
            <person name="Longmire J."/>
            <person name="Lucas S."/>
            <person name="Okinaka R."/>
            <person name="Richardson P."/>
            <person name="Rubin E."/>
            <person name="Tice H."/>
        </authorList>
    </citation>
    <scope>NUCLEOTIDE SEQUENCE [LARGE SCALE GENOMIC DNA]</scope>
    <source>
        <strain>Sterne</strain>
    </source>
</reference>
<comment type="function">
    <text evidence="1">Possible metal-dependent hydrolase.</text>
</comment>
<comment type="cofactor">
    <cofactor evidence="1">
        <name>Zn(2+)</name>
        <dbReference type="ChEBI" id="CHEBI:29105"/>
    </cofactor>
    <text evidence="1">Binds 1 zinc ion per subunit.</text>
</comment>
<comment type="subunit">
    <text evidence="1">Homodimer.</text>
</comment>
<comment type="subcellular location">
    <subcellularLocation>
        <location evidence="1">Cytoplasm</location>
    </subcellularLocation>
</comment>
<comment type="similarity">
    <text evidence="1">Belongs to the metal hydrolase YfiT family.</text>
</comment>
<sequence length="173" mass="20399">MNDLRYPIGQFTYKRPITEEMIDTWIQEIEDLPNELTKAIKDLDQKQLDTPYRVGGWTVRQVVHHVVDSHMNSYIRFKLALTEKNPTIKPYKEEKWAELPDSKLPVDVSLVMLESLHKRWVNLLYSLELEDLEKTFNHPDTGETKLAAAIGLYAWHGRHHTAHITSLRKRLNW</sequence>
<protein>
    <recommendedName>
        <fullName evidence="1">Putative metal-dependent hydrolase BA_2700/GBAA_2700/BAS2515</fullName>
        <ecNumber evidence="1">3.-.-.-</ecNumber>
    </recommendedName>
</protein>
<accession>Q81PU5</accession>
<accession>Q6HY13</accession>
<accession>Q6KS29</accession>
<name>Y2700_BACAN</name>
<keyword id="KW-0963">Cytoplasm</keyword>
<keyword id="KW-0378">Hydrolase</keyword>
<keyword id="KW-0479">Metal-binding</keyword>
<keyword id="KW-1185">Reference proteome</keyword>
<keyword id="KW-0862">Zinc</keyword>
<feature type="chain" id="PRO_0000162366" description="Putative metal-dependent hydrolase BA_2700/GBAA_2700/BAS2515">
    <location>
        <begin position="1"/>
        <end position="173"/>
    </location>
</feature>
<feature type="binding site" evidence="1">
    <location>
        <position position="65"/>
    </location>
    <ligand>
        <name>Zn(2+)</name>
        <dbReference type="ChEBI" id="CHEBI:29105"/>
    </ligand>
</feature>
<feature type="binding site" evidence="1">
    <location>
        <position position="156"/>
    </location>
    <ligand>
        <name>Zn(2+)</name>
        <dbReference type="ChEBI" id="CHEBI:29105"/>
    </ligand>
</feature>
<feature type="binding site" evidence="1">
    <location>
        <position position="160"/>
    </location>
    <ligand>
        <name>Zn(2+)</name>
        <dbReference type="ChEBI" id="CHEBI:29105"/>
    </ligand>
</feature>
<organism>
    <name type="scientific">Bacillus anthracis</name>
    <dbReference type="NCBI Taxonomy" id="1392"/>
    <lineage>
        <taxon>Bacteria</taxon>
        <taxon>Bacillati</taxon>
        <taxon>Bacillota</taxon>
        <taxon>Bacilli</taxon>
        <taxon>Bacillales</taxon>
        <taxon>Bacillaceae</taxon>
        <taxon>Bacillus</taxon>
        <taxon>Bacillus cereus group</taxon>
    </lineage>
</organism>